<protein>
    <recommendedName>
        <fullName>Uncharacterized gene 59 protein</fullName>
    </recommendedName>
</protein>
<organismHost>
    <name type="scientific">Equus caballus</name>
    <name type="common">Horse</name>
    <dbReference type="NCBI Taxonomy" id="9796"/>
</organismHost>
<name>VG59_EHV1B</name>
<sequence>MDVFGRGRAATADDYRRFLERNSRAAAKLAAATTPTHTASSRQQPEVSARPRHRSLSSRRNSVPHYDPHAGAGGDGQLALSERPSGTLGALAMAAQRRKSIGRPDTPVNAAMGSALRSSQRPRGDVRNPRGEGQTQRGGSRGEANHAQRRQSVTQSTAARQTQPHQGRPRPRRNTLRHM</sequence>
<evidence type="ECO:0000256" key="1">
    <source>
        <dbReference type="SAM" id="MobiDB-lite"/>
    </source>
</evidence>
<gene>
    <name type="ordered locus">59</name>
</gene>
<feature type="chain" id="PRO_0000116168" description="Uncharacterized gene 59 protein">
    <location>
        <begin position="1"/>
        <end position="179"/>
    </location>
</feature>
<feature type="region of interest" description="Disordered" evidence="1">
    <location>
        <begin position="26"/>
        <end position="179"/>
    </location>
</feature>
<feature type="compositionally biased region" description="Low complexity" evidence="1">
    <location>
        <begin position="26"/>
        <end position="39"/>
    </location>
</feature>
<feature type="compositionally biased region" description="Polar residues" evidence="1">
    <location>
        <begin position="150"/>
        <end position="165"/>
    </location>
</feature>
<feature type="compositionally biased region" description="Basic residues" evidence="1">
    <location>
        <begin position="167"/>
        <end position="179"/>
    </location>
</feature>
<accession>P28983</accession>
<accession>Q6S6U5</accession>
<reference key="1">
    <citation type="journal article" date="1992" name="Virology">
        <title>The DNA sequence of equine herpesvirus-1.</title>
        <authorList>
            <person name="Telford E.A.R."/>
            <person name="Watson M.S."/>
            <person name="McBride K."/>
            <person name="Davison A.J."/>
        </authorList>
    </citation>
    <scope>NUCLEOTIDE SEQUENCE [LARGE SCALE GENOMIC DNA]</scope>
</reference>
<organism>
    <name type="scientific">Equine herpesvirus 1 (strain Ab4p)</name>
    <name type="common">EHV-1</name>
    <name type="synonym">Equine abortion virus</name>
    <dbReference type="NCBI Taxonomy" id="31520"/>
    <lineage>
        <taxon>Viruses</taxon>
        <taxon>Duplodnaviria</taxon>
        <taxon>Heunggongvirae</taxon>
        <taxon>Peploviricota</taxon>
        <taxon>Herviviricetes</taxon>
        <taxon>Herpesvirales</taxon>
        <taxon>Orthoherpesviridae</taxon>
        <taxon>Alphaherpesvirinae</taxon>
        <taxon>Varicellovirus</taxon>
        <taxon>Varicellovirus equidalpha1</taxon>
        <taxon>Equid alphaherpesvirus 1</taxon>
    </lineage>
</organism>
<keyword id="KW-1185">Reference proteome</keyword>
<proteinExistence type="predicted"/>
<dbReference type="EMBL" id="AY665713">
    <property type="protein sequence ID" value="AAT67316.1"/>
    <property type="molecule type" value="Genomic_DNA"/>
</dbReference>
<dbReference type="PIR" id="E36801">
    <property type="entry name" value="E36801"/>
</dbReference>
<dbReference type="KEGG" id="vg:2948571"/>
<dbReference type="Proteomes" id="UP000001189">
    <property type="component" value="Segment"/>
</dbReference>
<dbReference type="InterPro" id="IPR035264">
    <property type="entry name" value="DUF5434"/>
</dbReference>
<dbReference type="Pfam" id="PF17502">
    <property type="entry name" value="DUF5434"/>
    <property type="match status" value="1"/>
</dbReference>